<sequence>MKVIFLVDVKGKGKKGEIKEVPTGYAQNFLIKKNLAREASSQAIGQLRGQQKAEEKAQAEILAEAKAVKKILDDEKTRVQFKEKVGPDGRTFGSITAKKISEELQKQFKVKVDKRHIVLDHPIRAIGLIEVPVKLHKEVIAEIKLNIAEA</sequence>
<feature type="chain" id="PRO_1000206562" description="Large ribosomal subunit protein bL9">
    <location>
        <begin position="1"/>
        <end position="150"/>
    </location>
</feature>
<evidence type="ECO:0000255" key="1">
    <source>
        <dbReference type="HAMAP-Rule" id="MF_00503"/>
    </source>
</evidence>
<evidence type="ECO:0000305" key="2"/>
<dbReference type="EMBL" id="FM204884">
    <property type="protein sequence ID" value="CAX00874.1"/>
    <property type="molecule type" value="Genomic_DNA"/>
</dbReference>
<dbReference type="SMR" id="C0MGP8"/>
<dbReference type="KEGG" id="seq:SZO_19100"/>
<dbReference type="eggNOG" id="COG0359">
    <property type="taxonomic scope" value="Bacteria"/>
</dbReference>
<dbReference type="HOGENOM" id="CLU_078938_3_2_9"/>
<dbReference type="Proteomes" id="UP000001368">
    <property type="component" value="Chromosome"/>
</dbReference>
<dbReference type="GO" id="GO:1990904">
    <property type="term" value="C:ribonucleoprotein complex"/>
    <property type="evidence" value="ECO:0007669"/>
    <property type="project" value="UniProtKB-KW"/>
</dbReference>
<dbReference type="GO" id="GO:0005840">
    <property type="term" value="C:ribosome"/>
    <property type="evidence" value="ECO:0007669"/>
    <property type="project" value="UniProtKB-KW"/>
</dbReference>
<dbReference type="GO" id="GO:0019843">
    <property type="term" value="F:rRNA binding"/>
    <property type="evidence" value="ECO:0007669"/>
    <property type="project" value="UniProtKB-UniRule"/>
</dbReference>
<dbReference type="GO" id="GO:0003735">
    <property type="term" value="F:structural constituent of ribosome"/>
    <property type="evidence" value="ECO:0007669"/>
    <property type="project" value="InterPro"/>
</dbReference>
<dbReference type="GO" id="GO:0006412">
    <property type="term" value="P:translation"/>
    <property type="evidence" value="ECO:0007669"/>
    <property type="project" value="UniProtKB-UniRule"/>
</dbReference>
<dbReference type="FunFam" id="3.40.5.10:FF:000002">
    <property type="entry name" value="50S ribosomal protein L9"/>
    <property type="match status" value="1"/>
</dbReference>
<dbReference type="Gene3D" id="3.10.430.100">
    <property type="entry name" value="Ribosomal protein L9, C-terminal domain"/>
    <property type="match status" value="1"/>
</dbReference>
<dbReference type="Gene3D" id="3.40.5.10">
    <property type="entry name" value="Ribosomal protein L9, N-terminal domain"/>
    <property type="match status" value="1"/>
</dbReference>
<dbReference type="HAMAP" id="MF_00503">
    <property type="entry name" value="Ribosomal_bL9"/>
    <property type="match status" value="1"/>
</dbReference>
<dbReference type="InterPro" id="IPR000244">
    <property type="entry name" value="Ribosomal_bL9"/>
</dbReference>
<dbReference type="InterPro" id="IPR009027">
    <property type="entry name" value="Ribosomal_bL9/RNase_H1_N"/>
</dbReference>
<dbReference type="InterPro" id="IPR020594">
    <property type="entry name" value="Ribosomal_bL9_bac/chp"/>
</dbReference>
<dbReference type="InterPro" id="IPR020069">
    <property type="entry name" value="Ribosomal_bL9_C"/>
</dbReference>
<dbReference type="InterPro" id="IPR036791">
    <property type="entry name" value="Ribosomal_bL9_C_sf"/>
</dbReference>
<dbReference type="InterPro" id="IPR020070">
    <property type="entry name" value="Ribosomal_bL9_N"/>
</dbReference>
<dbReference type="InterPro" id="IPR036935">
    <property type="entry name" value="Ribosomal_bL9_N_sf"/>
</dbReference>
<dbReference type="NCBIfam" id="TIGR00158">
    <property type="entry name" value="L9"/>
    <property type="match status" value="1"/>
</dbReference>
<dbReference type="PANTHER" id="PTHR21368">
    <property type="entry name" value="50S RIBOSOMAL PROTEIN L9"/>
    <property type="match status" value="1"/>
</dbReference>
<dbReference type="Pfam" id="PF03948">
    <property type="entry name" value="Ribosomal_L9_C"/>
    <property type="match status" value="1"/>
</dbReference>
<dbReference type="Pfam" id="PF01281">
    <property type="entry name" value="Ribosomal_L9_N"/>
    <property type="match status" value="1"/>
</dbReference>
<dbReference type="SUPFAM" id="SSF55658">
    <property type="entry name" value="L9 N-domain-like"/>
    <property type="match status" value="1"/>
</dbReference>
<dbReference type="SUPFAM" id="SSF55653">
    <property type="entry name" value="Ribosomal protein L9 C-domain"/>
    <property type="match status" value="1"/>
</dbReference>
<dbReference type="PROSITE" id="PS00651">
    <property type="entry name" value="RIBOSOMAL_L9"/>
    <property type="match status" value="1"/>
</dbReference>
<organism>
    <name type="scientific">Streptococcus equi subsp. zooepidemicus (strain H70)</name>
    <dbReference type="NCBI Taxonomy" id="553483"/>
    <lineage>
        <taxon>Bacteria</taxon>
        <taxon>Bacillati</taxon>
        <taxon>Bacillota</taxon>
        <taxon>Bacilli</taxon>
        <taxon>Lactobacillales</taxon>
        <taxon>Streptococcaceae</taxon>
        <taxon>Streptococcus</taxon>
    </lineage>
</organism>
<gene>
    <name evidence="1" type="primary">rplI</name>
    <name type="ordered locus">SZO_19100</name>
</gene>
<proteinExistence type="inferred from homology"/>
<name>RL9_STRS7</name>
<accession>C0MGP8</accession>
<keyword id="KW-0687">Ribonucleoprotein</keyword>
<keyword id="KW-0689">Ribosomal protein</keyword>
<keyword id="KW-0694">RNA-binding</keyword>
<keyword id="KW-0699">rRNA-binding</keyword>
<comment type="function">
    <text evidence="1">Binds to the 23S rRNA.</text>
</comment>
<comment type="similarity">
    <text evidence="1">Belongs to the bacterial ribosomal protein bL9 family.</text>
</comment>
<reference key="1">
    <citation type="journal article" date="2009" name="PLoS Pathog.">
        <title>Genomic evidence for the evolution of Streptococcus equi: host restriction, increased virulence, and genetic exchange with human pathogens.</title>
        <authorList>
            <person name="Holden M.T.G."/>
            <person name="Heather Z."/>
            <person name="Paillot R."/>
            <person name="Steward K.F."/>
            <person name="Webb K."/>
            <person name="Ainslie F."/>
            <person name="Jourdan T."/>
            <person name="Bason N.C."/>
            <person name="Holroyd N.E."/>
            <person name="Mungall K."/>
            <person name="Quail M.A."/>
            <person name="Sanders M."/>
            <person name="Simmonds M."/>
            <person name="Willey D."/>
            <person name="Brooks K."/>
            <person name="Aanensen D.M."/>
            <person name="Spratt B.G."/>
            <person name="Jolley K.A."/>
            <person name="Maiden M.C.J."/>
            <person name="Kehoe M."/>
            <person name="Chanter N."/>
            <person name="Bentley S.D."/>
            <person name="Robinson C."/>
            <person name="Maskell D.J."/>
            <person name="Parkhill J."/>
            <person name="Waller A.S."/>
        </authorList>
    </citation>
    <scope>NUCLEOTIDE SEQUENCE [LARGE SCALE GENOMIC DNA]</scope>
    <source>
        <strain>H70</strain>
    </source>
</reference>
<protein>
    <recommendedName>
        <fullName evidence="1">Large ribosomal subunit protein bL9</fullName>
    </recommendedName>
    <alternativeName>
        <fullName evidence="2">50S ribosomal protein L9</fullName>
    </alternativeName>
</protein>